<name>RM41_DANRE</name>
<comment type="function">
    <text evidence="2">Component of the mitochondrial ribosome large subunit. Also involved in apoptosis and cell cycle (By similarity).</text>
</comment>
<comment type="subunit">
    <text evidence="2">Component of the mitochondrial ribosome large subunit (39S) which comprises a 16S rRNA and about 50 distinct proteins.</text>
</comment>
<comment type="subcellular location">
    <subcellularLocation>
        <location evidence="2">Mitochondrion</location>
    </subcellularLocation>
</comment>
<comment type="similarity">
    <text evidence="3">Belongs to the mitochondrion-specific ribosomal protein mL41 family.</text>
</comment>
<dbReference type="EMBL" id="BC095781">
    <property type="protein sequence ID" value="AAH95781.1"/>
    <property type="molecule type" value="mRNA"/>
</dbReference>
<dbReference type="RefSeq" id="NP_001018603.1">
    <property type="nucleotide sequence ID" value="NM_001020767.1"/>
</dbReference>
<dbReference type="SMR" id="Q502B0"/>
<dbReference type="FunCoup" id="Q502B0">
    <property type="interactions" value="966"/>
</dbReference>
<dbReference type="STRING" id="7955.ENSDARP00000013437"/>
<dbReference type="PaxDb" id="7955-ENSDARP00000013437"/>
<dbReference type="GeneID" id="553805"/>
<dbReference type="KEGG" id="dre:553805"/>
<dbReference type="AGR" id="ZFIN:ZDB-GENE-050522-200"/>
<dbReference type="CTD" id="64975"/>
<dbReference type="ZFIN" id="ZDB-GENE-050522-200">
    <property type="gene designation" value="mrpl41"/>
</dbReference>
<dbReference type="eggNOG" id="KOG4756">
    <property type="taxonomic scope" value="Eukaryota"/>
</dbReference>
<dbReference type="InParanoid" id="Q502B0"/>
<dbReference type="OrthoDB" id="408933at2759"/>
<dbReference type="PhylomeDB" id="Q502B0"/>
<dbReference type="Reactome" id="R-DRE-5389840">
    <property type="pathway name" value="Mitochondrial translation elongation"/>
</dbReference>
<dbReference type="Reactome" id="R-DRE-5419276">
    <property type="pathway name" value="Mitochondrial translation termination"/>
</dbReference>
<dbReference type="PRO" id="PR:Q502B0"/>
<dbReference type="Proteomes" id="UP000000437">
    <property type="component" value="Chromosome 5"/>
</dbReference>
<dbReference type="GO" id="GO:0005762">
    <property type="term" value="C:mitochondrial large ribosomal subunit"/>
    <property type="evidence" value="ECO:0000250"/>
    <property type="project" value="UniProtKB"/>
</dbReference>
<dbReference type="GO" id="GO:1990904">
    <property type="term" value="C:ribonucleoprotein complex"/>
    <property type="evidence" value="ECO:0000250"/>
    <property type="project" value="UniProtKB"/>
</dbReference>
<dbReference type="GO" id="GO:0003735">
    <property type="term" value="F:structural constituent of ribosome"/>
    <property type="evidence" value="ECO:0000250"/>
    <property type="project" value="UniProtKB"/>
</dbReference>
<dbReference type="GO" id="GO:0006915">
    <property type="term" value="P:apoptotic process"/>
    <property type="evidence" value="ECO:0007669"/>
    <property type="project" value="UniProtKB-KW"/>
</dbReference>
<dbReference type="GO" id="GO:0006412">
    <property type="term" value="P:translation"/>
    <property type="evidence" value="ECO:0000250"/>
    <property type="project" value="UniProtKB"/>
</dbReference>
<dbReference type="InterPro" id="IPR019189">
    <property type="entry name" value="Ribosomal_mL41"/>
</dbReference>
<dbReference type="PANTHER" id="PTHR21338:SF0">
    <property type="entry name" value="LARGE RIBOSOMAL SUBUNIT PROTEIN ML41"/>
    <property type="match status" value="1"/>
</dbReference>
<dbReference type="PANTHER" id="PTHR21338">
    <property type="entry name" value="MITOCHONDRIAL RIBOSOMAL PROTEIN L41"/>
    <property type="match status" value="1"/>
</dbReference>
<dbReference type="Pfam" id="PF09809">
    <property type="entry name" value="MRP-L27"/>
    <property type="match status" value="1"/>
</dbReference>
<organism>
    <name type="scientific">Danio rerio</name>
    <name type="common">Zebrafish</name>
    <name type="synonym">Brachydanio rerio</name>
    <dbReference type="NCBI Taxonomy" id="7955"/>
    <lineage>
        <taxon>Eukaryota</taxon>
        <taxon>Metazoa</taxon>
        <taxon>Chordata</taxon>
        <taxon>Craniata</taxon>
        <taxon>Vertebrata</taxon>
        <taxon>Euteleostomi</taxon>
        <taxon>Actinopterygii</taxon>
        <taxon>Neopterygii</taxon>
        <taxon>Teleostei</taxon>
        <taxon>Ostariophysi</taxon>
        <taxon>Cypriniformes</taxon>
        <taxon>Danionidae</taxon>
        <taxon>Danioninae</taxon>
        <taxon>Danio</taxon>
    </lineage>
</organism>
<sequence>MGVLSALARGFVRGADRMAEWTSKRGPRTFYKSRGARPTGIVTSSRKFIPIRAMIPEFAVPNLEGFNLKAYVSYKTPAGTEEPMTPEKLFNEVVAPQIQRDIEEGVFSEDNLEKYGLEKTQEGKLFKLHPKNFAR</sequence>
<accession>Q502B0</accession>
<reference key="1">
    <citation type="submission" date="2005-05" db="EMBL/GenBank/DDBJ databases">
        <authorList>
            <consortium name="NIH - Zebrafish Gene Collection (ZGC) project"/>
        </authorList>
    </citation>
    <scope>NUCLEOTIDE SEQUENCE [LARGE SCALE MRNA]</scope>
    <source>
        <tissue>Brain</tissue>
    </source>
</reference>
<keyword id="KW-0053">Apoptosis</keyword>
<keyword id="KW-0131">Cell cycle</keyword>
<keyword id="KW-0496">Mitochondrion</keyword>
<keyword id="KW-1185">Reference proteome</keyword>
<keyword id="KW-0687">Ribonucleoprotein</keyword>
<keyword id="KW-0689">Ribosomal protein</keyword>
<keyword id="KW-0809">Transit peptide</keyword>
<feature type="transit peptide" description="Mitochondrion" evidence="1">
    <location>
        <begin position="1"/>
        <end position="13"/>
    </location>
</feature>
<feature type="chain" id="PRO_0000273231" description="Large ribosomal subunit protein mL41">
    <location>
        <begin position="14"/>
        <end position="135"/>
    </location>
</feature>
<evidence type="ECO:0000250" key="1"/>
<evidence type="ECO:0000250" key="2">
    <source>
        <dbReference type="UniProtKB" id="Q8IXM3"/>
    </source>
</evidence>
<evidence type="ECO:0000305" key="3"/>
<gene>
    <name type="primary">mrpl41</name>
    <name type="ORF">zgc:112362</name>
</gene>
<proteinExistence type="evidence at transcript level"/>
<protein>
    <recommendedName>
        <fullName evidence="3">Large ribosomal subunit protein mL41</fullName>
    </recommendedName>
    <alternativeName>
        <fullName>39S ribosomal protein L41, mitochondrial</fullName>
        <shortName>L41mt</shortName>
        <shortName>MRP-L41</shortName>
    </alternativeName>
</protein>